<protein>
    <recommendedName>
        <fullName evidence="1">Large ribosomal subunit protein bL32</fullName>
    </recommendedName>
    <alternativeName>
        <fullName evidence="3">50S ribosomal protein L32</fullName>
    </alternativeName>
</protein>
<gene>
    <name evidence="1" type="primary">rpmF</name>
    <name type="ordered locus">M28_Spy1824</name>
</gene>
<sequence>MAVPARHTSKAKKNKRRTHYKLTAPSVQFDETTGDYSRSHRVSLKGYYKGRKIAKANEAK</sequence>
<comment type="similarity">
    <text evidence="1">Belongs to the bacterial ribosomal protein bL32 family.</text>
</comment>
<dbReference type="EMBL" id="CP000056">
    <property type="protein sequence ID" value="AAX72934.1"/>
    <property type="molecule type" value="Genomic_DNA"/>
</dbReference>
<dbReference type="RefSeq" id="WP_000290414.1">
    <property type="nucleotide sequence ID" value="NC_007296.2"/>
</dbReference>
<dbReference type="SMR" id="Q48QS6"/>
<dbReference type="GeneID" id="83689722"/>
<dbReference type="KEGG" id="spb:M28_Spy1824"/>
<dbReference type="HOGENOM" id="CLU_129084_2_3_9"/>
<dbReference type="GO" id="GO:0015934">
    <property type="term" value="C:large ribosomal subunit"/>
    <property type="evidence" value="ECO:0007669"/>
    <property type="project" value="InterPro"/>
</dbReference>
<dbReference type="GO" id="GO:0003735">
    <property type="term" value="F:structural constituent of ribosome"/>
    <property type="evidence" value="ECO:0007669"/>
    <property type="project" value="InterPro"/>
</dbReference>
<dbReference type="GO" id="GO:0006412">
    <property type="term" value="P:translation"/>
    <property type="evidence" value="ECO:0007669"/>
    <property type="project" value="UniProtKB-UniRule"/>
</dbReference>
<dbReference type="HAMAP" id="MF_00340">
    <property type="entry name" value="Ribosomal_bL32"/>
    <property type="match status" value="1"/>
</dbReference>
<dbReference type="InterPro" id="IPR002677">
    <property type="entry name" value="Ribosomal_bL32"/>
</dbReference>
<dbReference type="InterPro" id="IPR044957">
    <property type="entry name" value="Ribosomal_bL32_bact"/>
</dbReference>
<dbReference type="InterPro" id="IPR011332">
    <property type="entry name" value="Ribosomal_zn-bd"/>
</dbReference>
<dbReference type="NCBIfam" id="TIGR01031">
    <property type="entry name" value="rpmF_bact"/>
    <property type="match status" value="1"/>
</dbReference>
<dbReference type="PANTHER" id="PTHR35534">
    <property type="entry name" value="50S RIBOSOMAL PROTEIN L32"/>
    <property type="match status" value="1"/>
</dbReference>
<dbReference type="PANTHER" id="PTHR35534:SF1">
    <property type="entry name" value="LARGE RIBOSOMAL SUBUNIT PROTEIN BL32"/>
    <property type="match status" value="1"/>
</dbReference>
<dbReference type="Pfam" id="PF01783">
    <property type="entry name" value="Ribosomal_L32p"/>
    <property type="match status" value="1"/>
</dbReference>
<dbReference type="SUPFAM" id="SSF57829">
    <property type="entry name" value="Zn-binding ribosomal proteins"/>
    <property type="match status" value="1"/>
</dbReference>
<evidence type="ECO:0000255" key="1">
    <source>
        <dbReference type="HAMAP-Rule" id="MF_00340"/>
    </source>
</evidence>
<evidence type="ECO:0000256" key="2">
    <source>
        <dbReference type="SAM" id="MobiDB-lite"/>
    </source>
</evidence>
<evidence type="ECO:0000305" key="3"/>
<name>RL32_STRPM</name>
<accession>Q48QS6</accession>
<reference key="1">
    <citation type="journal article" date="2005" name="J. Infect. Dis.">
        <title>Genome sequence of a serotype M28 strain of group A Streptococcus: potential new insights into puerperal sepsis and bacterial disease specificity.</title>
        <authorList>
            <person name="Green N.M."/>
            <person name="Zhang S."/>
            <person name="Porcella S.F."/>
            <person name="Nagiec M.J."/>
            <person name="Barbian K.D."/>
            <person name="Beres S.B."/>
            <person name="Lefebvre R.B."/>
            <person name="Musser J.M."/>
        </authorList>
    </citation>
    <scope>NUCLEOTIDE SEQUENCE [LARGE SCALE GENOMIC DNA]</scope>
    <source>
        <strain>MGAS6180</strain>
    </source>
</reference>
<feature type="chain" id="PRO_0000225769" description="Large ribosomal subunit protein bL32">
    <location>
        <begin position="1"/>
        <end position="60"/>
    </location>
</feature>
<feature type="region of interest" description="Disordered" evidence="2">
    <location>
        <begin position="1"/>
        <end position="22"/>
    </location>
</feature>
<feature type="compositionally biased region" description="Basic residues" evidence="2">
    <location>
        <begin position="7"/>
        <end position="20"/>
    </location>
</feature>
<keyword id="KW-0687">Ribonucleoprotein</keyword>
<keyword id="KW-0689">Ribosomal protein</keyword>
<organism>
    <name type="scientific">Streptococcus pyogenes serotype M28 (strain MGAS6180)</name>
    <dbReference type="NCBI Taxonomy" id="319701"/>
    <lineage>
        <taxon>Bacteria</taxon>
        <taxon>Bacillati</taxon>
        <taxon>Bacillota</taxon>
        <taxon>Bacilli</taxon>
        <taxon>Lactobacillales</taxon>
        <taxon>Streptococcaceae</taxon>
        <taxon>Streptococcus</taxon>
    </lineage>
</organism>
<proteinExistence type="inferred from homology"/>